<gene>
    <name type="primary">CNGC12</name>
    <name type="ordered locus">At2g46450</name>
    <name type="ORF">F11C10.14</name>
</gene>
<reference key="1">
    <citation type="journal article" date="1999" name="Nature">
        <title>Sequence and analysis of chromosome 2 of the plant Arabidopsis thaliana.</title>
        <authorList>
            <person name="Lin X."/>
            <person name="Kaul S."/>
            <person name="Rounsley S.D."/>
            <person name="Shea T.P."/>
            <person name="Benito M.-I."/>
            <person name="Town C.D."/>
            <person name="Fujii C.Y."/>
            <person name="Mason T.M."/>
            <person name="Bowman C.L."/>
            <person name="Barnstead M.E."/>
            <person name="Feldblyum T.V."/>
            <person name="Buell C.R."/>
            <person name="Ketchum K.A."/>
            <person name="Lee J.J."/>
            <person name="Ronning C.M."/>
            <person name="Koo H.L."/>
            <person name="Moffat K.S."/>
            <person name="Cronin L.A."/>
            <person name="Shen M."/>
            <person name="Pai G."/>
            <person name="Van Aken S."/>
            <person name="Umayam L."/>
            <person name="Tallon L.J."/>
            <person name="Gill J.E."/>
            <person name="Adams M.D."/>
            <person name="Carrera A.J."/>
            <person name="Creasy T.H."/>
            <person name="Goodman H.M."/>
            <person name="Somerville C.R."/>
            <person name="Copenhaver G.P."/>
            <person name="Preuss D."/>
            <person name="Nierman W.C."/>
            <person name="White O."/>
            <person name="Eisen J.A."/>
            <person name="Salzberg S.L."/>
            <person name="Fraser C.M."/>
            <person name="Venter J.C."/>
        </authorList>
    </citation>
    <scope>NUCLEOTIDE SEQUENCE [LARGE SCALE GENOMIC DNA]</scope>
    <source>
        <strain>cv. Columbia</strain>
    </source>
</reference>
<reference key="2">
    <citation type="journal article" date="2017" name="Plant J.">
        <title>Araport11: a complete reannotation of the Arabidopsis thaliana reference genome.</title>
        <authorList>
            <person name="Cheng C.Y."/>
            <person name="Krishnakumar V."/>
            <person name="Chan A.P."/>
            <person name="Thibaud-Nissen F."/>
            <person name="Schobel S."/>
            <person name="Town C.D."/>
        </authorList>
    </citation>
    <scope>GENOME REANNOTATION</scope>
    <source>
        <strain>cv. Columbia</strain>
    </source>
</reference>
<reference key="3">
    <citation type="journal article" date="2002" name="Science">
        <title>Functional annotation of a full-length Arabidopsis cDNA collection.</title>
        <authorList>
            <person name="Seki M."/>
            <person name="Narusaka M."/>
            <person name="Kamiya A."/>
            <person name="Ishida J."/>
            <person name="Satou M."/>
            <person name="Sakurai T."/>
            <person name="Nakajima M."/>
            <person name="Enju A."/>
            <person name="Akiyama K."/>
            <person name="Oono Y."/>
            <person name="Muramatsu M."/>
            <person name="Hayashizaki Y."/>
            <person name="Kawai J."/>
            <person name="Carninci P."/>
            <person name="Itoh M."/>
            <person name="Ishii Y."/>
            <person name="Arakawa T."/>
            <person name="Shibata K."/>
            <person name="Shinagawa A."/>
            <person name="Shinozaki K."/>
        </authorList>
    </citation>
    <scope>NUCLEOTIDE SEQUENCE [LARGE SCALE MRNA] (ISOFORM 2)</scope>
    <source>
        <strain>cv. Columbia</strain>
    </source>
</reference>
<reference key="4">
    <citation type="journal article" date="2001" name="Plant Physiol.">
        <title>Phylogenetic relationships within cation transporter families of Arabidopsis.</title>
        <authorList>
            <person name="Maeser P."/>
            <person name="Thomine S."/>
            <person name="Schroeder J.I."/>
            <person name="Ward J.M."/>
            <person name="Hirschi K."/>
            <person name="Sze H."/>
            <person name="Talke I.N."/>
            <person name="Amtmann A."/>
            <person name="Maathuis F.J.M."/>
            <person name="Sanders D."/>
            <person name="Harper J.F."/>
            <person name="Tchieu J."/>
            <person name="Gribskov M."/>
            <person name="Persans M.W."/>
            <person name="Salt D.E."/>
            <person name="Kim S.A."/>
            <person name="Guerinot M.L."/>
        </authorList>
    </citation>
    <scope>GENE FAMILY</scope>
    <scope>NOMENCLATURE</scope>
</reference>
<proteinExistence type="evidence at transcript level"/>
<comment type="function">
    <text>Probable cyclic nucleotide-gated ion channel.</text>
</comment>
<comment type="subunit">
    <text evidence="6">Homotetramer or heterotetramer.</text>
</comment>
<comment type="subcellular location">
    <subcellularLocation>
        <location evidence="6">Cell membrane</location>
        <topology evidence="6">Multi-pass membrane protein</topology>
    </subcellularLocation>
</comment>
<comment type="alternative products">
    <event type="alternative splicing"/>
    <isoform>
        <id>Q8GWD2-1</id>
        <name>1</name>
        <sequence type="displayed"/>
    </isoform>
    <isoform>
        <id>Q8GWD2-2</id>
        <name>2</name>
        <sequence type="described" ref="VSP_008989 VSP_008990"/>
    </isoform>
</comment>
<comment type="domain">
    <text evidence="1">The binding of calmodulin to the C-terminus might interfere with cyclic nucleotide binding and thus channel activation.</text>
</comment>
<comment type="miscellaneous">
    <molecule>Isoform 2</molecule>
    <text evidence="6">May be due to a competing acceptor splice site.</text>
</comment>
<comment type="similarity">
    <text evidence="6">Belongs to the cyclic nucleotide-gated cation channel (TC 1.A.1.5) family.</text>
</comment>
<comment type="sequence caution" evidence="6">
    <conflict type="erroneous gene model prediction">
        <sequence resource="EMBL-CDS" id="AAD23055"/>
    </conflict>
</comment>
<keyword id="KW-0025">Alternative splicing</keyword>
<keyword id="KW-0112">Calmodulin-binding</keyword>
<keyword id="KW-0114">cAMP</keyword>
<keyword id="KW-0116">cAMP-binding</keyword>
<keyword id="KW-1003">Cell membrane</keyword>
<keyword id="KW-0140">cGMP</keyword>
<keyword id="KW-0142">cGMP-binding</keyword>
<keyword id="KW-0407">Ion channel</keyword>
<keyword id="KW-0406">Ion transport</keyword>
<keyword id="KW-1071">Ligand-gated ion channel</keyword>
<keyword id="KW-0472">Membrane</keyword>
<keyword id="KW-0547">Nucleotide-binding</keyword>
<keyword id="KW-1185">Reference proteome</keyword>
<keyword id="KW-0812">Transmembrane</keyword>
<keyword id="KW-1133">Transmembrane helix</keyword>
<keyword id="KW-0813">Transport</keyword>
<protein>
    <recommendedName>
        <fullName>Probable cyclic nucleotide-gated ion channel 12</fullName>
    </recommendedName>
    <alternativeName>
        <fullName>Cyclic nucleotide- and calmodulin-regulated ion channel 12</fullName>
    </alternativeName>
</protein>
<name>CNG12_ARATH</name>
<evidence type="ECO:0000250" key="1"/>
<evidence type="ECO:0000255" key="2"/>
<evidence type="ECO:0000255" key="3">
    <source>
        <dbReference type="PROSITE-ProRule" id="PRU00116"/>
    </source>
</evidence>
<evidence type="ECO:0000256" key="4">
    <source>
        <dbReference type="SAM" id="MobiDB-lite"/>
    </source>
</evidence>
<evidence type="ECO:0000303" key="5">
    <source>
    </source>
</evidence>
<evidence type="ECO:0000305" key="6"/>
<organism>
    <name type="scientific">Arabidopsis thaliana</name>
    <name type="common">Mouse-ear cress</name>
    <dbReference type="NCBI Taxonomy" id="3702"/>
    <lineage>
        <taxon>Eukaryota</taxon>
        <taxon>Viridiplantae</taxon>
        <taxon>Streptophyta</taxon>
        <taxon>Embryophyta</taxon>
        <taxon>Tracheophyta</taxon>
        <taxon>Spermatophyta</taxon>
        <taxon>Magnoliopsida</taxon>
        <taxon>eudicotyledons</taxon>
        <taxon>Gunneridae</taxon>
        <taxon>Pentapetalae</taxon>
        <taxon>rosids</taxon>
        <taxon>malvids</taxon>
        <taxon>Brassicales</taxon>
        <taxon>Brassicaceae</taxon>
        <taxon>Camelineae</taxon>
        <taxon>Arabidopsis</taxon>
    </lineage>
</organism>
<accession>Q8GWD2</accession>
<accession>Q9SKD5</accession>
<feature type="chain" id="PRO_0000219340" description="Probable cyclic nucleotide-gated ion channel 12">
    <location>
        <begin position="1"/>
        <end position="649"/>
    </location>
</feature>
<feature type="topological domain" description="Cytoplasmic" evidence="2">
    <location>
        <begin position="1"/>
        <end position="43"/>
    </location>
</feature>
<feature type="transmembrane region" description="Helical; Name=H1" evidence="2">
    <location>
        <begin position="44"/>
        <end position="64"/>
    </location>
</feature>
<feature type="topological domain" description="Extracellular" evidence="2">
    <location>
        <begin position="65"/>
        <end position="76"/>
    </location>
</feature>
<feature type="transmembrane region" description="Helical; Name=H2" evidence="2">
    <location>
        <begin position="77"/>
        <end position="97"/>
    </location>
</feature>
<feature type="topological domain" description="Cytoplasmic" evidence="2">
    <location>
        <begin position="98"/>
        <end position="128"/>
    </location>
</feature>
<feature type="transmembrane region" description="Helical; Name=H3" evidence="2">
    <location>
        <begin position="129"/>
        <end position="149"/>
    </location>
</feature>
<feature type="topological domain" description="Extracellular" evidence="2">
    <location>
        <begin position="150"/>
        <end position="162"/>
    </location>
</feature>
<feature type="transmembrane region" description="Helical; Name=H4" evidence="2">
    <location>
        <begin position="163"/>
        <end position="183"/>
    </location>
</feature>
<feature type="topological domain" description="Cytoplasmic" evidence="2">
    <location>
        <begin position="184"/>
        <end position="200"/>
    </location>
</feature>
<feature type="transmembrane region" description="Helical; Name=H5" evidence="2">
    <location>
        <begin position="201"/>
        <end position="221"/>
    </location>
</feature>
<feature type="topological domain" description="Extracellular" evidence="2">
    <location>
        <begin position="222"/>
        <end position="329"/>
    </location>
</feature>
<feature type="transmembrane region" description="Helical; Name=H6" evidence="2">
    <location>
        <begin position="330"/>
        <end position="350"/>
    </location>
</feature>
<feature type="topological domain" description="Cytoplasmic" evidence="2">
    <location>
        <begin position="351"/>
        <end position="649"/>
    </location>
</feature>
<feature type="domain" description="IQ" evidence="3">
    <location>
        <begin position="565"/>
        <end position="594"/>
    </location>
</feature>
<feature type="region of interest" description="Calmodulin-binding" evidence="1">
    <location>
        <begin position="545"/>
        <end position="560"/>
    </location>
</feature>
<feature type="region of interest" description="Disordered" evidence="4">
    <location>
        <begin position="618"/>
        <end position="649"/>
    </location>
</feature>
<feature type="compositionally biased region" description="Basic and acidic residues" evidence="4">
    <location>
        <begin position="638"/>
        <end position="649"/>
    </location>
</feature>
<feature type="binding site">
    <location>
        <begin position="436"/>
        <end position="559"/>
    </location>
    <ligand>
        <name>a nucleoside 3',5'-cyclic phosphate</name>
        <dbReference type="ChEBI" id="CHEBI:58464"/>
    </ligand>
</feature>
<feature type="binding site" evidence="1">
    <location>
        <position position="507"/>
    </location>
    <ligand>
        <name>a nucleoside 3',5'-cyclic phosphate</name>
        <dbReference type="ChEBI" id="CHEBI:58464"/>
    </ligand>
</feature>
<feature type="splice variant" id="VSP_008989" description="In isoform 2." evidence="5">
    <original>SALGQNLETSNSAGEIFFAIIICVSGLLLFAVLIGNVQKYLQSSTTRVDEMEE</original>
    <variation>RLIHSTVLWAKTWRQATLQGRFSLLSSYVSLVYSCLLCSLETFRSTCNHLLLE</variation>
    <location>
        <begin position="316"/>
        <end position="368"/>
    </location>
</feature>
<feature type="splice variant" id="VSP_008990" description="In isoform 2." evidence="5">
    <location>
        <begin position="369"/>
        <end position="649"/>
    </location>
</feature>
<sequence>MNHRRSKFARIDSMGVDGKLKSVRGRLKKVYGKMKTLENWRKTVLLACVVALAIDPLFLFIPLIDSQRFCFTFDKTLVAVVCVIRTFIDTFYVIHIIYYLITETIAPRSQASLRGEIVVHSKATLKTRLLFHFIVDIISVLPIPQVVVLTLIPLSASLVSERILKWIILSQYVPRIIRMYPLYKEVTRAFGTVAESKWAGAALNLFLYMLHSYVFGAFWYLSSIERKSKCWRAACARTSDCNLTVTDLLCKRAGSDNIRFLNTSCPLIDPAQITNSTDFDFGMYIDALKSGVLEVKPKDFPRKFVYCFWWGLRNISALGQNLETSNSAGEIFFAIIICVSGLLLFAVLIGNVQKYLQSSTTRVDEMEEKRRDTEKWMSYRVIPEYLKERIRRFEDYKWRETKGTEEEALLRSLPKDLRLETKRYLYLDMLKRVPWLNIMDDGWLLEAVCDRVKSVFYLANSFIVREGHPVEEMLIVTRGKLKSTTGSHEMGVRNNCCDLQDGDICGELLFNGSRLPTSTRTVMTLTEVEGFILLPDDIKFIASHLNVFQRQKLQRTFRLYSQQWRSWAAFFIQAAWRKHCKRKLSKTRDNENIPQGTQLNLASTLYVSRFVSKALQNRRKDTADCSSSPDMSPPVPHKPADLEFAKAEA</sequence>
<dbReference type="EMBL" id="AC006526">
    <property type="protein sequence ID" value="AAD23055.1"/>
    <property type="status" value="ALT_SEQ"/>
    <property type="molecule type" value="Genomic_DNA"/>
</dbReference>
<dbReference type="EMBL" id="CP002685">
    <property type="protein sequence ID" value="AEC10697.1"/>
    <property type="molecule type" value="Genomic_DNA"/>
</dbReference>
<dbReference type="EMBL" id="CP002685">
    <property type="protein sequence ID" value="ANM62322.1"/>
    <property type="molecule type" value="Genomic_DNA"/>
</dbReference>
<dbReference type="EMBL" id="AK118918">
    <property type="protein sequence ID" value="BAC43501.1"/>
    <property type="molecule type" value="mRNA"/>
</dbReference>
<dbReference type="PIR" id="A84903">
    <property type="entry name" value="A84903"/>
</dbReference>
<dbReference type="RefSeq" id="NP_001324486.1">
    <molecule id="Q8GWD2-1"/>
    <property type="nucleotide sequence ID" value="NM_001337192.1"/>
</dbReference>
<dbReference type="RefSeq" id="NP_850454.5">
    <molecule id="Q8GWD2-1"/>
    <property type="nucleotide sequence ID" value="NM_180123.6"/>
</dbReference>
<dbReference type="BioGRID" id="4588">
    <property type="interactions" value="3"/>
</dbReference>
<dbReference type="FunCoup" id="Q8GWD2">
    <property type="interactions" value="202"/>
</dbReference>
<dbReference type="STRING" id="3702.Q8GWD2"/>
<dbReference type="iPTMnet" id="Q8GWD2"/>
<dbReference type="PaxDb" id="3702-AT2G46450.1"/>
<dbReference type="ProteomicsDB" id="220481">
    <molecule id="Q8GWD2-1"/>
</dbReference>
<dbReference type="EnsemblPlants" id="AT2G46450.1">
    <molecule id="Q8GWD2-1"/>
    <property type="protein sequence ID" value="AT2G46450.1"/>
    <property type="gene ID" value="AT2G46450"/>
</dbReference>
<dbReference type="EnsemblPlants" id="AT2G46450.4">
    <molecule id="Q8GWD2-1"/>
    <property type="protein sequence ID" value="AT2G46450.4"/>
    <property type="gene ID" value="AT2G46450"/>
</dbReference>
<dbReference type="GeneID" id="819253"/>
<dbReference type="Gramene" id="AT2G46450.1">
    <molecule id="Q8GWD2-1"/>
    <property type="protein sequence ID" value="AT2G46450.1"/>
    <property type="gene ID" value="AT2G46450"/>
</dbReference>
<dbReference type="Gramene" id="AT2G46450.4">
    <molecule id="Q8GWD2-1"/>
    <property type="protein sequence ID" value="AT2G46450.4"/>
    <property type="gene ID" value="AT2G46450"/>
</dbReference>
<dbReference type="KEGG" id="ath:AT2G46450"/>
<dbReference type="Araport" id="AT2G46450"/>
<dbReference type="TAIR" id="AT2G46450">
    <property type="gene designation" value="CNGC12"/>
</dbReference>
<dbReference type="eggNOG" id="KOG0498">
    <property type="taxonomic scope" value="Eukaryota"/>
</dbReference>
<dbReference type="InParanoid" id="Q8GWD2"/>
<dbReference type="OMA" id="RYQYCAR"/>
<dbReference type="OrthoDB" id="421226at2759"/>
<dbReference type="PhylomeDB" id="Q8GWD2"/>
<dbReference type="PRO" id="PR:Q8GWD2"/>
<dbReference type="Proteomes" id="UP000006548">
    <property type="component" value="Chromosome 2"/>
</dbReference>
<dbReference type="ExpressionAtlas" id="Q8GWD2">
    <property type="expression patterns" value="baseline and differential"/>
</dbReference>
<dbReference type="GO" id="GO:0005886">
    <property type="term" value="C:plasma membrane"/>
    <property type="evidence" value="ECO:0000314"/>
    <property type="project" value="TAIR"/>
</dbReference>
<dbReference type="GO" id="GO:0005516">
    <property type="term" value="F:calmodulin binding"/>
    <property type="evidence" value="ECO:0007669"/>
    <property type="project" value="UniProtKB-KW"/>
</dbReference>
<dbReference type="GO" id="GO:0030552">
    <property type="term" value="F:cAMP binding"/>
    <property type="evidence" value="ECO:0007669"/>
    <property type="project" value="UniProtKB-KW"/>
</dbReference>
<dbReference type="GO" id="GO:0030553">
    <property type="term" value="F:cGMP binding"/>
    <property type="evidence" value="ECO:0007669"/>
    <property type="project" value="UniProtKB-KW"/>
</dbReference>
<dbReference type="GO" id="GO:0005261">
    <property type="term" value="F:monoatomic cation channel activity"/>
    <property type="evidence" value="ECO:0000315"/>
    <property type="project" value="TAIR"/>
</dbReference>
<dbReference type="GO" id="GO:0006952">
    <property type="term" value="P:defense response"/>
    <property type="evidence" value="ECO:0000316"/>
    <property type="project" value="TAIR"/>
</dbReference>
<dbReference type="GO" id="GO:0009617">
    <property type="term" value="P:response to bacterium"/>
    <property type="evidence" value="ECO:0000316"/>
    <property type="project" value="TAIR"/>
</dbReference>
<dbReference type="GO" id="GO:0009620">
    <property type="term" value="P:response to fungus"/>
    <property type="evidence" value="ECO:0000315"/>
    <property type="project" value="TAIR"/>
</dbReference>
<dbReference type="CDD" id="cd00038">
    <property type="entry name" value="CAP_ED"/>
    <property type="match status" value="1"/>
</dbReference>
<dbReference type="Gene3D" id="1.10.287.70">
    <property type="match status" value="1"/>
</dbReference>
<dbReference type="Gene3D" id="1.10.287.630">
    <property type="entry name" value="Helix hairpin bin"/>
    <property type="match status" value="1"/>
</dbReference>
<dbReference type="Gene3D" id="2.60.120.10">
    <property type="entry name" value="Jelly Rolls"/>
    <property type="match status" value="1"/>
</dbReference>
<dbReference type="InterPro" id="IPR000595">
    <property type="entry name" value="cNMP-bd_dom"/>
</dbReference>
<dbReference type="InterPro" id="IPR018490">
    <property type="entry name" value="cNMP-bd_dom_sf"/>
</dbReference>
<dbReference type="InterPro" id="IPR005821">
    <property type="entry name" value="Ion_trans_dom"/>
</dbReference>
<dbReference type="InterPro" id="IPR014710">
    <property type="entry name" value="RmlC-like_jellyroll"/>
</dbReference>
<dbReference type="PANTHER" id="PTHR45651:SF33">
    <property type="entry name" value="CYCLIC NUCLEOTIDE-GATED ION CHANNEL 12-RELATED"/>
    <property type="match status" value="1"/>
</dbReference>
<dbReference type="PANTHER" id="PTHR45651">
    <property type="entry name" value="CYCLIC NUCLEOTIDE-GATED ION CHANNEL 15-RELATED-RELATED"/>
    <property type="match status" value="1"/>
</dbReference>
<dbReference type="Pfam" id="PF00520">
    <property type="entry name" value="Ion_trans"/>
    <property type="match status" value="1"/>
</dbReference>
<dbReference type="SMART" id="SM00100">
    <property type="entry name" value="cNMP"/>
    <property type="match status" value="1"/>
</dbReference>
<dbReference type="SUPFAM" id="SSF51206">
    <property type="entry name" value="cAMP-binding domain-like"/>
    <property type="match status" value="1"/>
</dbReference>
<dbReference type="SUPFAM" id="SSF81324">
    <property type="entry name" value="Voltage-gated potassium channels"/>
    <property type="match status" value="1"/>
</dbReference>
<dbReference type="PROSITE" id="PS50042">
    <property type="entry name" value="CNMP_BINDING_3"/>
    <property type="match status" value="1"/>
</dbReference>
<dbReference type="PROSITE" id="PS50096">
    <property type="entry name" value="IQ"/>
    <property type="match status" value="1"/>
</dbReference>